<evidence type="ECO:0000250" key="1">
    <source>
        <dbReference type="UniProtKB" id="B4XC07"/>
    </source>
</evidence>
<evidence type="ECO:0000250" key="2">
    <source>
        <dbReference type="UniProtKB" id="Q99036"/>
    </source>
</evidence>
<evidence type="ECO:0000255" key="3"/>
<evidence type="ECO:0000269" key="4">
    <source>
    </source>
</evidence>
<evidence type="ECO:0000305" key="5"/>
<sequence>MVPTRNRPMLRILGFFICAAFIYLSFRDLWLNHKGKAKLGFVKRNGTQFVVDDKPLYVNGWNSYWFMDHAVDEHSRNLVGEMLEAGAKMGLTVCRTWAFNDGGYNALQISPGRFDERVFQALDHVIAEARKHDVRLLLSLVNNLQAYGGKTQYVKWAWQEGVGLSSSNDSFFFDPSIRNYFKNYLKVLLTRKNSVTGIEYRNDPTIFAWELINEPRCTTDVSGKTLQDWIDEMTGFIKSIDDKHLLTVGLEGFYGPNSPKGLTVNPEQWASQLGTDFVQNSNSSNIDFASVHIYPDHWFHNQTFEEKLKFVVKWMQSHIEDGLKELKKPVLFTEFGLSNQNKDYEPSQRDKFYRIIFDVVYKSAKRKKSGAGTLVWQLFMEGMETFNDDFGIVPHEQDSIYKLMIEQSCRLGKVTGRLKEQKLKELCSHRH</sequence>
<name>MAN5_ARATH</name>
<gene>
    <name type="primary">MAN5</name>
    <name type="ordered locus">At4g28320</name>
    <name type="ORF">F26K10.200</name>
</gene>
<proteinExistence type="evidence at transcript level"/>
<protein>
    <recommendedName>
        <fullName>Mannan endo-1,4-beta-mannosidase 5</fullName>
        <ecNumber>3.2.1.78</ecNumber>
    </recommendedName>
    <alternativeName>
        <fullName>Beta-mannanase 5</fullName>
    </alternativeName>
    <alternativeName>
        <fullName>Endo-beta-1,4-mannanase 5</fullName>
        <shortName>AtMAN5</shortName>
    </alternativeName>
</protein>
<dbReference type="EC" id="3.2.1.78"/>
<dbReference type="EMBL" id="AL161572">
    <property type="protein sequence ID" value="CAB79634.1"/>
    <property type="molecule type" value="Genomic_DNA"/>
</dbReference>
<dbReference type="EMBL" id="CP002687">
    <property type="protein sequence ID" value="AEE85469.1"/>
    <property type="molecule type" value="Genomic_DNA"/>
</dbReference>
<dbReference type="EMBL" id="AK228732">
    <property type="protein sequence ID" value="BAF00634.1"/>
    <property type="molecule type" value="mRNA"/>
</dbReference>
<dbReference type="EMBL" id="BT026124">
    <property type="protein sequence ID" value="ABG48480.1"/>
    <property type="molecule type" value="mRNA"/>
</dbReference>
<dbReference type="PIR" id="T09048">
    <property type="entry name" value="T09048"/>
</dbReference>
<dbReference type="RefSeq" id="NP_194561.1">
    <property type="nucleotide sequence ID" value="NM_118972.5"/>
</dbReference>
<dbReference type="SMR" id="Q9M0H6"/>
<dbReference type="FunCoup" id="Q9M0H6">
    <property type="interactions" value="75"/>
</dbReference>
<dbReference type="STRING" id="3702.Q9M0H6"/>
<dbReference type="CAZy" id="GH5">
    <property type="family name" value="Glycoside Hydrolase Family 5"/>
</dbReference>
<dbReference type="GlyCosmos" id="Q9M0H6">
    <property type="glycosylation" value="4 sites, No reported glycans"/>
</dbReference>
<dbReference type="GlyGen" id="Q9M0H6">
    <property type="glycosylation" value="4 sites"/>
</dbReference>
<dbReference type="iPTMnet" id="Q9M0H6"/>
<dbReference type="PaxDb" id="3702-AT4G28320.1"/>
<dbReference type="ProteomicsDB" id="238651"/>
<dbReference type="EnsemblPlants" id="AT4G28320.1">
    <property type="protein sequence ID" value="AT4G28320.1"/>
    <property type="gene ID" value="AT4G28320"/>
</dbReference>
<dbReference type="GeneID" id="828947"/>
<dbReference type="Gramene" id="AT4G28320.1">
    <property type="protein sequence ID" value="AT4G28320.1"/>
    <property type="gene ID" value="AT4G28320"/>
</dbReference>
<dbReference type="KEGG" id="ath:AT4G28320"/>
<dbReference type="Araport" id="AT4G28320"/>
<dbReference type="TAIR" id="AT4G28320">
    <property type="gene designation" value="MAN5"/>
</dbReference>
<dbReference type="eggNOG" id="ENOG502QS4Q">
    <property type="taxonomic scope" value="Eukaryota"/>
</dbReference>
<dbReference type="HOGENOM" id="CLU_031603_0_0_1"/>
<dbReference type="InParanoid" id="Q9M0H6"/>
<dbReference type="OMA" id="YFQLHDK"/>
<dbReference type="OrthoDB" id="406631at2759"/>
<dbReference type="PhylomeDB" id="Q9M0H6"/>
<dbReference type="BioCyc" id="ARA:AT4G28320-MONOMER"/>
<dbReference type="BRENDA" id="3.2.1.78">
    <property type="organism ID" value="399"/>
</dbReference>
<dbReference type="PRO" id="PR:Q9M0H6"/>
<dbReference type="Proteomes" id="UP000006548">
    <property type="component" value="Chromosome 4"/>
</dbReference>
<dbReference type="ExpressionAtlas" id="Q9M0H6">
    <property type="expression patterns" value="baseline and differential"/>
</dbReference>
<dbReference type="GO" id="GO:0005576">
    <property type="term" value="C:extracellular region"/>
    <property type="evidence" value="ECO:0007669"/>
    <property type="project" value="UniProtKB-SubCell"/>
</dbReference>
<dbReference type="GO" id="GO:0000138">
    <property type="term" value="C:Golgi trans cisterna"/>
    <property type="evidence" value="ECO:0007005"/>
    <property type="project" value="TAIR"/>
</dbReference>
<dbReference type="GO" id="GO:0016985">
    <property type="term" value="F:mannan endo-1,4-beta-mannosidase activity"/>
    <property type="evidence" value="ECO:0007669"/>
    <property type="project" value="UniProtKB-EC"/>
</dbReference>
<dbReference type="GO" id="GO:0000272">
    <property type="term" value="P:polysaccharide catabolic process"/>
    <property type="evidence" value="ECO:0007669"/>
    <property type="project" value="InterPro"/>
</dbReference>
<dbReference type="GO" id="GO:0009845">
    <property type="term" value="P:seed germination"/>
    <property type="evidence" value="ECO:0000315"/>
    <property type="project" value="TAIR"/>
</dbReference>
<dbReference type="FunFam" id="3.20.20.80:FF:000012">
    <property type="entry name" value="Mannan endo-1,4-beta-mannosidase 6"/>
    <property type="match status" value="1"/>
</dbReference>
<dbReference type="Gene3D" id="3.20.20.80">
    <property type="entry name" value="Glycosidases"/>
    <property type="match status" value="1"/>
</dbReference>
<dbReference type="InterPro" id="IPR001547">
    <property type="entry name" value="Glyco_hydro_5"/>
</dbReference>
<dbReference type="InterPro" id="IPR017853">
    <property type="entry name" value="Glycoside_hydrolase_SF"/>
</dbReference>
<dbReference type="InterPro" id="IPR045053">
    <property type="entry name" value="MAN-like"/>
</dbReference>
<dbReference type="PANTHER" id="PTHR31451">
    <property type="match status" value="1"/>
</dbReference>
<dbReference type="PANTHER" id="PTHR31451:SF48">
    <property type="entry name" value="MANNAN ENDO-1,4-BETA-MANNOSIDASE 5"/>
    <property type="match status" value="1"/>
</dbReference>
<dbReference type="Pfam" id="PF00150">
    <property type="entry name" value="Cellulase"/>
    <property type="match status" value="1"/>
</dbReference>
<dbReference type="SUPFAM" id="SSF51445">
    <property type="entry name" value="(Trans)glycosidases"/>
    <property type="match status" value="1"/>
</dbReference>
<feature type="signal peptide" evidence="3">
    <location>
        <begin position="1"/>
        <end position="24"/>
    </location>
</feature>
<feature type="chain" id="PRO_0000277478" description="Mannan endo-1,4-beta-mannosidase 5">
    <location>
        <begin position="25"/>
        <end position="431"/>
    </location>
</feature>
<feature type="active site" description="Proton donor" evidence="2">
    <location>
        <position position="214"/>
    </location>
</feature>
<feature type="active site" description="Nucleophile" evidence="2">
    <location>
        <position position="334"/>
    </location>
</feature>
<feature type="binding site" evidence="1">
    <location>
        <position position="97"/>
    </location>
    <ligand>
        <name>substrate</name>
    </ligand>
</feature>
<feature type="binding site" evidence="1">
    <location>
        <position position="213"/>
    </location>
    <ligand>
        <name>substrate</name>
    </ligand>
</feature>
<feature type="binding site" evidence="1">
    <location>
        <position position="294"/>
    </location>
    <ligand>
        <name>substrate</name>
    </ligand>
</feature>
<feature type="binding site" evidence="1">
    <location>
        <position position="376"/>
    </location>
    <ligand>
        <name>substrate</name>
    </ligand>
</feature>
<feature type="glycosylation site" description="N-linked (GlcNAc...) asparagine" evidence="3">
    <location>
        <position position="45"/>
    </location>
</feature>
<feature type="glycosylation site" description="N-linked (GlcNAc...) asparagine" evidence="3">
    <location>
        <position position="168"/>
    </location>
</feature>
<feature type="glycosylation site" description="N-linked (GlcNAc...) asparagine" evidence="3">
    <location>
        <position position="282"/>
    </location>
</feature>
<feature type="glycosylation site" description="N-linked (GlcNAc...) asparagine" evidence="3">
    <location>
        <position position="301"/>
    </location>
</feature>
<organism>
    <name type="scientific">Arabidopsis thaliana</name>
    <name type="common">Mouse-ear cress</name>
    <dbReference type="NCBI Taxonomy" id="3702"/>
    <lineage>
        <taxon>Eukaryota</taxon>
        <taxon>Viridiplantae</taxon>
        <taxon>Streptophyta</taxon>
        <taxon>Embryophyta</taxon>
        <taxon>Tracheophyta</taxon>
        <taxon>Spermatophyta</taxon>
        <taxon>Magnoliopsida</taxon>
        <taxon>eudicotyledons</taxon>
        <taxon>Gunneridae</taxon>
        <taxon>Pentapetalae</taxon>
        <taxon>rosids</taxon>
        <taxon>malvids</taxon>
        <taxon>Brassicales</taxon>
        <taxon>Brassicaceae</taxon>
        <taxon>Camelineae</taxon>
        <taxon>Arabidopsis</taxon>
    </lineage>
</organism>
<accession>Q9M0H6</accession>
<reference key="1">
    <citation type="journal article" date="1999" name="Nature">
        <title>Sequence and analysis of chromosome 4 of the plant Arabidopsis thaliana.</title>
        <authorList>
            <person name="Mayer K.F.X."/>
            <person name="Schueller C."/>
            <person name="Wambutt R."/>
            <person name="Murphy G."/>
            <person name="Volckaert G."/>
            <person name="Pohl T."/>
            <person name="Duesterhoeft A."/>
            <person name="Stiekema W."/>
            <person name="Entian K.-D."/>
            <person name="Terryn N."/>
            <person name="Harris B."/>
            <person name="Ansorge W."/>
            <person name="Brandt P."/>
            <person name="Grivell L.A."/>
            <person name="Rieger M."/>
            <person name="Weichselgartner M."/>
            <person name="de Simone V."/>
            <person name="Obermaier B."/>
            <person name="Mache R."/>
            <person name="Mueller M."/>
            <person name="Kreis M."/>
            <person name="Delseny M."/>
            <person name="Puigdomenech P."/>
            <person name="Watson M."/>
            <person name="Schmidtheini T."/>
            <person name="Reichert B."/>
            <person name="Portetelle D."/>
            <person name="Perez-Alonso M."/>
            <person name="Boutry M."/>
            <person name="Bancroft I."/>
            <person name="Vos P."/>
            <person name="Hoheisel J."/>
            <person name="Zimmermann W."/>
            <person name="Wedler H."/>
            <person name="Ridley P."/>
            <person name="Langham S.-A."/>
            <person name="McCullagh B."/>
            <person name="Bilham L."/>
            <person name="Robben J."/>
            <person name="van der Schueren J."/>
            <person name="Grymonprez B."/>
            <person name="Chuang Y.-J."/>
            <person name="Vandenbussche F."/>
            <person name="Braeken M."/>
            <person name="Weltjens I."/>
            <person name="Voet M."/>
            <person name="Bastiaens I."/>
            <person name="Aert R."/>
            <person name="Defoor E."/>
            <person name="Weitzenegger T."/>
            <person name="Bothe G."/>
            <person name="Ramsperger U."/>
            <person name="Hilbert H."/>
            <person name="Braun M."/>
            <person name="Holzer E."/>
            <person name="Brandt A."/>
            <person name="Peters S."/>
            <person name="van Staveren M."/>
            <person name="Dirkse W."/>
            <person name="Mooijman P."/>
            <person name="Klein Lankhorst R."/>
            <person name="Rose M."/>
            <person name="Hauf J."/>
            <person name="Koetter P."/>
            <person name="Berneiser S."/>
            <person name="Hempel S."/>
            <person name="Feldpausch M."/>
            <person name="Lamberth S."/>
            <person name="Van den Daele H."/>
            <person name="De Keyser A."/>
            <person name="Buysshaert C."/>
            <person name="Gielen J."/>
            <person name="Villarroel R."/>
            <person name="De Clercq R."/>
            <person name="van Montagu M."/>
            <person name="Rogers J."/>
            <person name="Cronin A."/>
            <person name="Quail M.A."/>
            <person name="Bray-Allen S."/>
            <person name="Clark L."/>
            <person name="Doggett J."/>
            <person name="Hall S."/>
            <person name="Kay M."/>
            <person name="Lennard N."/>
            <person name="McLay K."/>
            <person name="Mayes R."/>
            <person name="Pettett A."/>
            <person name="Rajandream M.A."/>
            <person name="Lyne M."/>
            <person name="Benes V."/>
            <person name="Rechmann S."/>
            <person name="Borkova D."/>
            <person name="Bloecker H."/>
            <person name="Scharfe M."/>
            <person name="Grimm M."/>
            <person name="Loehnert T.-H."/>
            <person name="Dose S."/>
            <person name="de Haan M."/>
            <person name="Maarse A.C."/>
            <person name="Schaefer M."/>
            <person name="Mueller-Auer S."/>
            <person name="Gabel C."/>
            <person name="Fuchs M."/>
            <person name="Fartmann B."/>
            <person name="Granderath K."/>
            <person name="Dauner D."/>
            <person name="Herzl A."/>
            <person name="Neumann S."/>
            <person name="Argiriou A."/>
            <person name="Vitale D."/>
            <person name="Liguori R."/>
            <person name="Piravandi E."/>
            <person name="Massenet O."/>
            <person name="Quigley F."/>
            <person name="Clabauld G."/>
            <person name="Muendlein A."/>
            <person name="Felber R."/>
            <person name="Schnabl S."/>
            <person name="Hiller R."/>
            <person name="Schmidt W."/>
            <person name="Lecharny A."/>
            <person name="Aubourg S."/>
            <person name="Chefdor F."/>
            <person name="Cooke R."/>
            <person name="Berger C."/>
            <person name="Monfort A."/>
            <person name="Casacuberta E."/>
            <person name="Gibbons T."/>
            <person name="Weber N."/>
            <person name="Vandenbol M."/>
            <person name="Bargues M."/>
            <person name="Terol J."/>
            <person name="Torres A."/>
            <person name="Perez-Perez A."/>
            <person name="Purnelle B."/>
            <person name="Bent E."/>
            <person name="Johnson S."/>
            <person name="Tacon D."/>
            <person name="Jesse T."/>
            <person name="Heijnen L."/>
            <person name="Schwarz S."/>
            <person name="Scholler P."/>
            <person name="Heber S."/>
            <person name="Francs P."/>
            <person name="Bielke C."/>
            <person name="Frishman D."/>
            <person name="Haase D."/>
            <person name="Lemcke K."/>
            <person name="Mewes H.-W."/>
            <person name="Stocker S."/>
            <person name="Zaccaria P."/>
            <person name="Bevan M."/>
            <person name="Wilson R.K."/>
            <person name="de la Bastide M."/>
            <person name="Habermann K."/>
            <person name="Parnell L."/>
            <person name="Dedhia N."/>
            <person name="Gnoj L."/>
            <person name="Schutz K."/>
            <person name="Huang E."/>
            <person name="Spiegel L."/>
            <person name="Sekhon M."/>
            <person name="Murray J."/>
            <person name="Sheet P."/>
            <person name="Cordes M."/>
            <person name="Abu-Threideh J."/>
            <person name="Stoneking T."/>
            <person name="Kalicki J."/>
            <person name="Graves T."/>
            <person name="Harmon G."/>
            <person name="Edwards J."/>
            <person name="Latreille P."/>
            <person name="Courtney L."/>
            <person name="Cloud J."/>
            <person name="Abbott A."/>
            <person name="Scott K."/>
            <person name="Johnson D."/>
            <person name="Minx P."/>
            <person name="Bentley D."/>
            <person name="Fulton B."/>
            <person name="Miller N."/>
            <person name="Greco T."/>
            <person name="Kemp K."/>
            <person name="Kramer J."/>
            <person name="Fulton L."/>
            <person name="Mardis E."/>
            <person name="Dante M."/>
            <person name="Pepin K."/>
            <person name="Hillier L.W."/>
            <person name="Nelson J."/>
            <person name="Spieth J."/>
            <person name="Ryan E."/>
            <person name="Andrews S."/>
            <person name="Geisel C."/>
            <person name="Layman D."/>
            <person name="Du H."/>
            <person name="Ali J."/>
            <person name="Berghoff A."/>
            <person name="Jones K."/>
            <person name="Drone K."/>
            <person name="Cotton M."/>
            <person name="Joshu C."/>
            <person name="Antonoiu B."/>
            <person name="Zidanic M."/>
            <person name="Strong C."/>
            <person name="Sun H."/>
            <person name="Lamar B."/>
            <person name="Yordan C."/>
            <person name="Ma P."/>
            <person name="Zhong J."/>
            <person name="Preston R."/>
            <person name="Vil D."/>
            <person name="Shekher M."/>
            <person name="Matero A."/>
            <person name="Shah R."/>
            <person name="Swaby I.K."/>
            <person name="O'Shaughnessy A."/>
            <person name="Rodriguez M."/>
            <person name="Hoffman J."/>
            <person name="Till S."/>
            <person name="Granat S."/>
            <person name="Shohdy N."/>
            <person name="Hasegawa A."/>
            <person name="Hameed A."/>
            <person name="Lodhi M."/>
            <person name="Johnson A."/>
            <person name="Chen E."/>
            <person name="Marra M.A."/>
            <person name="Martienssen R."/>
            <person name="McCombie W.R."/>
        </authorList>
    </citation>
    <scope>NUCLEOTIDE SEQUENCE [LARGE SCALE GENOMIC DNA]</scope>
    <source>
        <strain>cv. Columbia</strain>
    </source>
</reference>
<reference key="2">
    <citation type="journal article" date="2017" name="Plant J.">
        <title>Araport11: a complete reannotation of the Arabidopsis thaliana reference genome.</title>
        <authorList>
            <person name="Cheng C.Y."/>
            <person name="Krishnakumar V."/>
            <person name="Chan A.P."/>
            <person name="Thibaud-Nissen F."/>
            <person name="Schobel S."/>
            <person name="Town C.D."/>
        </authorList>
    </citation>
    <scope>GENOME REANNOTATION</scope>
    <source>
        <strain>cv. Columbia</strain>
    </source>
</reference>
<reference key="3">
    <citation type="submission" date="2006-07" db="EMBL/GenBank/DDBJ databases">
        <title>Large-scale analysis of RIKEN Arabidopsis full-length (RAFL) cDNAs.</title>
        <authorList>
            <person name="Totoki Y."/>
            <person name="Seki M."/>
            <person name="Ishida J."/>
            <person name="Nakajima M."/>
            <person name="Enju A."/>
            <person name="Kamiya A."/>
            <person name="Narusaka M."/>
            <person name="Shin-i T."/>
            <person name="Nakagawa M."/>
            <person name="Sakamoto N."/>
            <person name="Oishi K."/>
            <person name="Kohara Y."/>
            <person name="Kobayashi M."/>
            <person name="Toyoda A."/>
            <person name="Sakaki Y."/>
            <person name="Sakurai T."/>
            <person name="Iida K."/>
            <person name="Akiyama K."/>
            <person name="Satou M."/>
            <person name="Toyoda T."/>
            <person name="Konagaya A."/>
            <person name="Carninci P."/>
            <person name="Kawai J."/>
            <person name="Hayashizaki Y."/>
            <person name="Shinozaki K."/>
        </authorList>
    </citation>
    <scope>NUCLEOTIDE SEQUENCE [LARGE SCALE MRNA]</scope>
    <source>
        <strain>cv. Columbia</strain>
    </source>
</reference>
<reference key="4">
    <citation type="submission" date="2006-07" db="EMBL/GenBank/DDBJ databases">
        <title>Arabidopsis ORF clones.</title>
        <authorList>
            <person name="Kim C.J."/>
            <person name="Chen H."/>
            <person name="Quinitio C."/>
            <person name="Shinn P."/>
            <person name="Ecker J.R."/>
        </authorList>
    </citation>
    <scope>NUCLEOTIDE SEQUENCE [LARGE SCALE MRNA]</scope>
    <source>
        <strain>cv. Columbia</strain>
    </source>
</reference>
<reference key="5">
    <citation type="journal article" date="2007" name="Funct. Integr. Genomics">
        <title>The endo-beta-mannanase gene families in Arabidopsis, rice, and poplar.</title>
        <authorList>
            <person name="Yuan J.S."/>
            <person name="Yang X."/>
            <person name="Lai J."/>
            <person name="Lin H."/>
            <person name="Cheng Z.-M."/>
            <person name="Nonogaki H."/>
            <person name="Chen F."/>
        </authorList>
    </citation>
    <scope>GENE FAMILY</scope>
    <scope>TISSUE SPECIFICITY</scope>
</reference>
<comment type="catalytic activity">
    <reaction>
        <text>Random hydrolysis of (1-&gt;4)-beta-D-mannosidic linkages in mannans, galactomannans and glucomannans.</text>
        <dbReference type="EC" id="3.2.1.78"/>
    </reaction>
</comment>
<comment type="subcellular location">
    <subcellularLocation>
        <location evidence="5">Secreted</location>
    </subcellularLocation>
</comment>
<comment type="tissue specificity">
    <text evidence="4">Expressed in stems.</text>
</comment>
<comment type="similarity">
    <text evidence="5">Belongs to the glycosyl hydrolase 5 (cellulase A) family.</text>
</comment>
<keyword id="KW-0325">Glycoprotein</keyword>
<keyword id="KW-0326">Glycosidase</keyword>
<keyword id="KW-0378">Hydrolase</keyword>
<keyword id="KW-1185">Reference proteome</keyword>
<keyword id="KW-0964">Secreted</keyword>
<keyword id="KW-0732">Signal</keyword>